<keyword id="KW-1185">Reference proteome</keyword>
<organism>
    <name type="scientific">Ureaplasma parvum serovar 3 (strain ATCC 700970)</name>
    <dbReference type="NCBI Taxonomy" id="273119"/>
    <lineage>
        <taxon>Bacteria</taxon>
        <taxon>Bacillati</taxon>
        <taxon>Mycoplasmatota</taxon>
        <taxon>Mycoplasmoidales</taxon>
        <taxon>Mycoplasmoidaceae</taxon>
        <taxon>Ureaplasma</taxon>
    </lineage>
</organism>
<accession>Q9PQW4</accession>
<name>Y179_UREPA</name>
<proteinExistence type="predicted"/>
<gene>
    <name type="ordered locus">UU179</name>
</gene>
<feature type="chain" id="PRO_0000220829" description="Uncharacterized protein UU179">
    <location>
        <begin position="1"/>
        <end position="73"/>
    </location>
</feature>
<dbReference type="EMBL" id="AF222894">
    <property type="protein sequence ID" value="AAF30586.1"/>
    <property type="molecule type" value="Genomic_DNA"/>
</dbReference>
<dbReference type="RefSeq" id="WP_010891702.1">
    <property type="nucleotide sequence ID" value="NC_002162.1"/>
</dbReference>
<dbReference type="STRING" id="273119.UU179"/>
<dbReference type="EnsemblBacteria" id="AAF30586">
    <property type="protein sequence ID" value="AAF30586"/>
    <property type="gene ID" value="UU179"/>
</dbReference>
<dbReference type="GeneID" id="29672618"/>
<dbReference type="KEGG" id="uur:UU179"/>
<dbReference type="PATRIC" id="fig|273119.6.peg.186"/>
<dbReference type="HOGENOM" id="CLU_2738904_0_0_14"/>
<dbReference type="OrthoDB" id="404038at2"/>
<dbReference type="Proteomes" id="UP000000423">
    <property type="component" value="Chromosome"/>
</dbReference>
<protein>
    <recommendedName>
        <fullName>Uncharacterized protein UU179</fullName>
    </recommendedName>
</protein>
<reference key="1">
    <citation type="journal article" date="2000" name="Nature">
        <title>The complete sequence of the mucosal pathogen Ureaplasma urealyticum.</title>
        <authorList>
            <person name="Glass J.I."/>
            <person name="Lefkowitz E.J."/>
            <person name="Glass J.S."/>
            <person name="Heiner C.R."/>
            <person name="Chen E.Y."/>
            <person name="Cassell G.H."/>
        </authorList>
    </citation>
    <scope>NUCLEOTIDE SEQUENCE [LARGE SCALE GENOMIC DNA]</scope>
    <source>
        <strain>ATCC 700970</strain>
    </source>
</reference>
<sequence>MLIKPAKRSEKIYTIIAIKDSVVTLKNDYQDEKNIQIYEFDLQNIIPEVGKFINLIKYDQQGCSVFEEYDKNI</sequence>